<name>TRPB_BUCMH</name>
<reference key="1">
    <citation type="journal article" date="1999" name="Mol. Biol. Evol.">
        <title>Sequence evolution in bacterial endosymbionts having extreme base compositions.</title>
        <authorList>
            <person name="Clark M.A."/>
            <person name="Moran N.A."/>
            <person name="Baumann P."/>
        </authorList>
    </citation>
    <scope>NUCLEOTIDE SEQUENCE [GENOMIC DNA]</scope>
</reference>
<reference key="2">
    <citation type="journal article" date="1996" name="J. Mol. Evol.">
        <title>The tryptophan biosynthetic pathway of aphid endosymbionts (Buchnera): genetics and evolution of plasmid-associated anthranilate synthase (trpEG) within the aphididae.</title>
        <authorList>
            <person name="Rouhbakhsh D."/>
            <person name="Lai C.-Y."/>
            <person name="von Dohlen C.D."/>
            <person name="Clark M.A."/>
            <person name="Baumann L."/>
            <person name="Baumann P."/>
            <person name="Moran N.A."/>
            <person name="Voegtlin D.J."/>
        </authorList>
    </citation>
    <scope>NUCLEOTIDE SEQUENCE [GENOMIC DNA] OF 116-341</scope>
</reference>
<keyword id="KW-0028">Amino-acid biosynthesis</keyword>
<keyword id="KW-0057">Aromatic amino acid biosynthesis</keyword>
<keyword id="KW-0456">Lyase</keyword>
<keyword id="KW-0663">Pyridoxal phosphate</keyword>
<keyword id="KW-0822">Tryptophan biosynthesis</keyword>
<accession>Q44687</accession>
<protein>
    <recommendedName>
        <fullName>Tryptophan synthase beta chain</fullName>
        <ecNumber>4.2.1.20</ecNumber>
    </recommendedName>
</protein>
<dbReference type="EC" id="4.2.1.20"/>
<dbReference type="EMBL" id="AF132318">
    <property type="protein sequence ID" value="AAF14254.1"/>
    <property type="molecule type" value="Genomic_DNA"/>
</dbReference>
<dbReference type="EMBL" id="L46357">
    <property type="protein sequence ID" value="AAB05972.1"/>
    <property type="molecule type" value="Genomic_DNA"/>
</dbReference>
<dbReference type="RefSeq" id="WP_158336486.1">
    <property type="nucleotide sequence ID" value="NZ_CP033004.1"/>
</dbReference>
<dbReference type="SMR" id="Q44687"/>
<dbReference type="OrthoDB" id="9766131at2"/>
<dbReference type="UniPathway" id="UPA00035">
    <property type="reaction ID" value="UER00044"/>
</dbReference>
<dbReference type="GO" id="GO:0005737">
    <property type="term" value="C:cytoplasm"/>
    <property type="evidence" value="ECO:0007669"/>
    <property type="project" value="TreeGrafter"/>
</dbReference>
<dbReference type="GO" id="GO:0004834">
    <property type="term" value="F:tryptophan synthase activity"/>
    <property type="evidence" value="ECO:0007669"/>
    <property type="project" value="UniProtKB-UniRule"/>
</dbReference>
<dbReference type="CDD" id="cd06446">
    <property type="entry name" value="Trp-synth_B"/>
    <property type="match status" value="1"/>
</dbReference>
<dbReference type="FunFam" id="3.40.50.1100:FF:000001">
    <property type="entry name" value="Tryptophan synthase beta chain"/>
    <property type="match status" value="1"/>
</dbReference>
<dbReference type="FunFam" id="3.40.50.1100:FF:000004">
    <property type="entry name" value="Tryptophan synthase beta chain"/>
    <property type="match status" value="1"/>
</dbReference>
<dbReference type="Gene3D" id="3.40.50.1100">
    <property type="match status" value="2"/>
</dbReference>
<dbReference type="HAMAP" id="MF_00133">
    <property type="entry name" value="Trp_synth_beta"/>
    <property type="match status" value="1"/>
</dbReference>
<dbReference type="InterPro" id="IPR006653">
    <property type="entry name" value="Trp_synth_b_CS"/>
</dbReference>
<dbReference type="InterPro" id="IPR006654">
    <property type="entry name" value="Trp_synth_beta"/>
</dbReference>
<dbReference type="InterPro" id="IPR023026">
    <property type="entry name" value="Trp_synth_beta/beta-like"/>
</dbReference>
<dbReference type="InterPro" id="IPR001926">
    <property type="entry name" value="TrpB-like_PALP"/>
</dbReference>
<dbReference type="InterPro" id="IPR036052">
    <property type="entry name" value="TrpB-like_PALP_sf"/>
</dbReference>
<dbReference type="NCBIfam" id="TIGR00263">
    <property type="entry name" value="trpB"/>
    <property type="match status" value="1"/>
</dbReference>
<dbReference type="PANTHER" id="PTHR48077:SF3">
    <property type="entry name" value="TRYPTOPHAN SYNTHASE"/>
    <property type="match status" value="1"/>
</dbReference>
<dbReference type="PANTHER" id="PTHR48077">
    <property type="entry name" value="TRYPTOPHAN SYNTHASE-RELATED"/>
    <property type="match status" value="1"/>
</dbReference>
<dbReference type="Pfam" id="PF00291">
    <property type="entry name" value="PALP"/>
    <property type="match status" value="1"/>
</dbReference>
<dbReference type="PIRSF" id="PIRSF001413">
    <property type="entry name" value="Trp_syn_beta"/>
    <property type="match status" value="1"/>
</dbReference>
<dbReference type="SUPFAM" id="SSF53686">
    <property type="entry name" value="Tryptophan synthase beta subunit-like PLP-dependent enzymes"/>
    <property type="match status" value="1"/>
</dbReference>
<dbReference type="PROSITE" id="PS00168">
    <property type="entry name" value="TRP_SYNTHASE_BETA"/>
    <property type="match status" value="1"/>
</dbReference>
<comment type="function">
    <text evidence="1">The beta subunit is responsible for the synthesis of L-tryptophan from indole and L-serine.</text>
</comment>
<comment type="catalytic activity">
    <reaction>
        <text>(1S,2R)-1-C-(indol-3-yl)glycerol 3-phosphate + L-serine = D-glyceraldehyde 3-phosphate + L-tryptophan + H2O</text>
        <dbReference type="Rhea" id="RHEA:10532"/>
        <dbReference type="ChEBI" id="CHEBI:15377"/>
        <dbReference type="ChEBI" id="CHEBI:33384"/>
        <dbReference type="ChEBI" id="CHEBI:57912"/>
        <dbReference type="ChEBI" id="CHEBI:58866"/>
        <dbReference type="ChEBI" id="CHEBI:59776"/>
        <dbReference type="EC" id="4.2.1.20"/>
    </reaction>
</comment>
<comment type="cofactor">
    <cofactor evidence="1">
        <name>pyridoxal 5'-phosphate</name>
        <dbReference type="ChEBI" id="CHEBI:597326"/>
    </cofactor>
</comment>
<comment type="pathway">
    <text>Amino-acid biosynthesis; L-tryptophan biosynthesis; L-tryptophan from chorismate: step 5/5.</text>
</comment>
<comment type="subunit">
    <text evidence="1">Tetramer of two alpha and two beta chains.</text>
</comment>
<comment type="similarity">
    <text evidence="2">Belongs to the TrpB family.</text>
</comment>
<proteinExistence type="inferred from homology"/>
<feature type="chain" id="PRO_0000098930" description="Tryptophan synthase beta chain">
    <location>
        <begin position="1"/>
        <end position="392"/>
    </location>
</feature>
<feature type="modified residue" description="N6-(pyridoxal phosphate)lysine" evidence="1">
    <location>
        <position position="86"/>
    </location>
</feature>
<feature type="sequence conflict" description="In Ref. 2; AAB05972." evidence="2" ref="2">
    <original>Y</original>
    <variation>N</variation>
    <location>
        <position position="316"/>
    </location>
</feature>
<organism>
    <name type="scientific">Buchnera aphidicola subsp. Melaphis rhois</name>
    <dbReference type="NCBI Taxonomy" id="118103"/>
    <lineage>
        <taxon>Bacteria</taxon>
        <taxon>Pseudomonadati</taxon>
        <taxon>Pseudomonadota</taxon>
        <taxon>Gammaproteobacteria</taxon>
        <taxon>Enterobacterales</taxon>
        <taxon>Erwiniaceae</taxon>
        <taxon>Buchnera</taxon>
    </lineage>
</organism>
<gene>
    <name type="primary">trpB</name>
</gene>
<sequence length="392" mass="43107">MTLLNSYFGDFGGMYVPQILMPALYQLEEEFIFSLKSSKFKIELSNLLENYAGRPTPLTLCRNLTKGTKTKIYLKREDLLHGGAHKTNQVLGQALLAKKMKKKEIIAETGAGQHGVAAAFSCALLNLKCRIYMGLKDINRQQQNVFRMKLMGAEVIPVKTGSGTLKDACNEALRDWSENYINAHYMLGTAAGPHPYPTIVKEFQSIIGKETKRQIVREENCLPNAVIACVGGGSNAIGIFSSFISDNSVSLIGVEPGGKGIHTNKHGAPLTHGETGIFFGMKTKIMQTEEGQIKESWSISAGLDFPAVGPEHAWLYSTKRAQYVSITDHEAVNAFRCLSKSEGIIPALESSHALAYALKLMNNHPQKNQILIVNISGRGDKDIETVKNFLKM</sequence>
<evidence type="ECO:0000250" key="1"/>
<evidence type="ECO:0000305" key="2"/>